<proteinExistence type="evidence at protein level"/>
<accession>P82064</accession>
<name>FLET_LIMFT</name>
<organism>
    <name type="scientific">Limnodynastes fletcheri</name>
    <name type="common">Barking marsh frog</name>
    <dbReference type="NCBI Taxonomy" id="39403"/>
    <lineage>
        <taxon>Eukaryota</taxon>
        <taxon>Metazoa</taxon>
        <taxon>Chordata</taxon>
        <taxon>Craniata</taxon>
        <taxon>Vertebrata</taxon>
        <taxon>Euteleostomi</taxon>
        <taxon>Amphibia</taxon>
        <taxon>Batrachia</taxon>
        <taxon>Anura</taxon>
        <taxon>Neobatrachia</taxon>
        <taxon>Myobatrachoidea</taxon>
        <taxon>Limnodynastidae</taxon>
        <taxon>Limnodynastes</taxon>
    </lineage>
</organism>
<reference key="1">
    <citation type="journal article" date="1993" name="Aust. J. Chem.">
        <title>Peptides from Australian frogs. The structure of the dynastins from Limnodynastes salmini and fletcherin from Limnodynastes fletcheri.</title>
        <authorList>
            <person name="Bradford A.M."/>
            <person name="Raftery M.J."/>
            <person name="Bowie J.H."/>
            <person name="Wallace J.C."/>
            <person name="Tyler M.J."/>
        </authorList>
    </citation>
    <scope>PROTEIN SEQUENCE</scope>
    <scope>MASS SPECTROMETRY</scope>
    <source>
        <tissue>Skin secretion</tissue>
    </source>
</reference>
<feature type="peptide" id="PRO_0000043797" description="Fletcherin">
    <location>
        <begin position="1"/>
        <end position="13"/>
    </location>
</feature>
<protein>
    <recommendedName>
        <fullName>Fletcherin</fullName>
    </recommendedName>
</protein>
<dbReference type="GO" id="GO:0005576">
    <property type="term" value="C:extracellular region"/>
    <property type="evidence" value="ECO:0007669"/>
    <property type="project" value="UniProtKB-SubCell"/>
</dbReference>
<comment type="subcellular location">
    <subcellularLocation>
        <location>Secreted</location>
    </subcellularLocation>
</comment>
<comment type="tissue specificity">
    <text>Expressed by the skin dorsal glands.</text>
</comment>
<comment type="mass spectrometry"/>
<sequence>AGPVSKLVSGIGL</sequence>
<evidence type="ECO:0000269" key="1">
    <source ref="1"/>
</evidence>
<keyword id="KW-0903">Direct protein sequencing</keyword>
<keyword id="KW-0964">Secreted</keyword>